<accession>Q8XDL7</accession>
<keyword id="KW-1185">Reference proteome</keyword>
<feature type="chain" id="PRO_0000214580" description="UPF0260 protein YcgN">
    <location>
        <begin position="1"/>
        <end position="153"/>
    </location>
</feature>
<organism>
    <name type="scientific">Escherichia coli O157:H7</name>
    <dbReference type="NCBI Taxonomy" id="83334"/>
    <lineage>
        <taxon>Bacteria</taxon>
        <taxon>Pseudomonadati</taxon>
        <taxon>Pseudomonadota</taxon>
        <taxon>Gammaproteobacteria</taxon>
        <taxon>Enterobacterales</taxon>
        <taxon>Enterobacteriaceae</taxon>
        <taxon>Escherichia</taxon>
    </lineage>
</organism>
<comment type="similarity">
    <text evidence="1">Belongs to the UPF0260 family.</text>
</comment>
<comment type="sequence caution" evidence="2">
    <conflict type="erroneous initiation">
        <sequence resource="EMBL-CDS" id="AAG56032"/>
    </conflict>
</comment>
<comment type="sequence caution" evidence="2">
    <conflict type="erroneous initiation">
        <sequence resource="EMBL-CDS" id="BAB35099"/>
    </conflict>
</comment>
<sequence>MAEHLMSDVPFWQSKTLDEMSDAEWESLCDGCGQCCLHKLMDEDTDEIYFTNVACRQLNIKTCQCRNYERRFEFEPDCIKLTRENLPTFEWLPMTCAYRLLAEGKDLPAWHPLLTGSKAAMHGERISVRHIAVKESEVIDWQDHILNKPDWAQ</sequence>
<evidence type="ECO:0000255" key="1">
    <source>
        <dbReference type="HAMAP-Rule" id="MF_00676"/>
    </source>
</evidence>
<evidence type="ECO:0000305" key="2"/>
<proteinExistence type="inferred from homology"/>
<name>YCGN_ECO57</name>
<dbReference type="EMBL" id="AE005174">
    <property type="protein sequence ID" value="AAG56032.1"/>
    <property type="status" value="ALT_INIT"/>
    <property type="molecule type" value="Genomic_DNA"/>
</dbReference>
<dbReference type="EMBL" id="BA000007">
    <property type="protein sequence ID" value="BAB35099.1"/>
    <property type="status" value="ALT_INIT"/>
    <property type="molecule type" value="Genomic_DNA"/>
</dbReference>
<dbReference type="PIR" id="D85696">
    <property type="entry name" value="D85696"/>
</dbReference>
<dbReference type="PIR" id="D90838">
    <property type="entry name" value="D90838"/>
</dbReference>
<dbReference type="RefSeq" id="NP_309703.4">
    <property type="nucleotide sequence ID" value="NC_002695.1"/>
</dbReference>
<dbReference type="STRING" id="155864.Z1943"/>
<dbReference type="GeneID" id="913197"/>
<dbReference type="KEGG" id="ece:Z1943"/>
<dbReference type="KEGG" id="ecs:ECs_1676"/>
<dbReference type="PATRIC" id="fig|386585.9.peg.1773"/>
<dbReference type="eggNOG" id="COG2983">
    <property type="taxonomic scope" value="Bacteria"/>
</dbReference>
<dbReference type="HOGENOM" id="CLU_109769_2_0_6"/>
<dbReference type="Proteomes" id="UP000000558">
    <property type="component" value="Chromosome"/>
</dbReference>
<dbReference type="Proteomes" id="UP000002519">
    <property type="component" value="Chromosome"/>
</dbReference>
<dbReference type="HAMAP" id="MF_00676">
    <property type="entry name" value="UPF0260"/>
    <property type="match status" value="1"/>
</dbReference>
<dbReference type="InterPro" id="IPR005358">
    <property type="entry name" value="Puta_zinc/iron-chelating_dom"/>
</dbReference>
<dbReference type="InterPro" id="IPR008228">
    <property type="entry name" value="UCP006173"/>
</dbReference>
<dbReference type="NCBIfam" id="NF003498">
    <property type="entry name" value="PRK05170.1-1"/>
    <property type="match status" value="1"/>
</dbReference>
<dbReference type="NCBIfam" id="NF003501">
    <property type="entry name" value="PRK05170.1-5"/>
    <property type="match status" value="1"/>
</dbReference>
<dbReference type="NCBIfam" id="NF003503">
    <property type="entry name" value="PRK05170.2-1"/>
    <property type="match status" value="1"/>
</dbReference>
<dbReference type="NCBIfam" id="NF003507">
    <property type="entry name" value="PRK05170.2-5"/>
    <property type="match status" value="1"/>
</dbReference>
<dbReference type="PANTHER" id="PTHR37421">
    <property type="entry name" value="UPF0260 PROTEIN YCGN"/>
    <property type="match status" value="1"/>
</dbReference>
<dbReference type="PANTHER" id="PTHR37421:SF1">
    <property type="entry name" value="UPF0260 PROTEIN YCGN"/>
    <property type="match status" value="1"/>
</dbReference>
<dbReference type="Pfam" id="PF03692">
    <property type="entry name" value="CxxCxxCC"/>
    <property type="match status" value="1"/>
</dbReference>
<dbReference type="PIRSF" id="PIRSF006173">
    <property type="entry name" value="UCP006173"/>
    <property type="match status" value="1"/>
</dbReference>
<protein>
    <recommendedName>
        <fullName evidence="1">UPF0260 protein YcgN</fullName>
    </recommendedName>
</protein>
<gene>
    <name evidence="1" type="primary">ycgN</name>
    <name type="ordered locus">Z1943</name>
    <name type="ordered locus">ECs1676</name>
</gene>
<reference key="1">
    <citation type="journal article" date="2001" name="Nature">
        <title>Genome sequence of enterohaemorrhagic Escherichia coli O157:H7.</title>
        <authorList>
            <person name="Perna N.T."/>
            <person name="Plunkett G. III"/>
            <person name="Burland V."/>
            <person name="Mau B."/>
            <person name="Glasner J.D."/>
            <person name="Rose D.J."/>
            <person name="Mayhew G.F."/>
            <person name="Evans P.S."/>
            <person name="Gregor J."/>
            <person name="Kirkpatrick H.A."/>
            <person name="Posfai G."/>
            <person name="Hackett J."/>
            <person name="Klink S."/>
            <person name="Boutin A."/>
            <person name="Shao Y."/>
            <person name="Miller L."/>
            <person name="Grotbeck E.J."/>
            <person name="Davis N.W."/>
            <person name="Lim A."/>
            <person name="Dimalanta E.T."/>
            <person name="Potamousis K."/>
            <person name="Apodaca J."/>
            <person name="Anantharaman T.S."/>
            <person name="Lin J."/>
            <person name="Yen G."/>
            <person name="Schwartz D.C."/>
            <person name="Welch R.A."/>
            <person name="Blattner F.R."/>
        </authorList>
    </citation>
    <scope>NUCLEOTIDE SEQUENCE [LARGE SCALE GENOMIC DNA]</scope>
    <source>
        <strain>O157:H7 / EDL933 / ATCC 700927 / EHEC</strain>
    </source>
</reference>
<reference key="2">
    <citation type="journal article" date="2001" name="DNA Res.">
        <title>Complete genome sequence of enterohemorrhagic Escherichia coli O157:H7 and genomic comparison with a laboratory strain K-12.</title>
        <authorList>
            <person name="Hayashi T."/>
            <person name="Makino K."/>
            <person name="Ohnishi M."/>
            <person name="Kurokawa K."/>
            <person name="Ishii K."/>
            <person name="Yokoyama K."/>
            <person name="Han C.-G."/>
            <person name="Ohtsubo E."/>
            <person name="Nakayama K."/>
            <person name="Murata T."/>
            <person name="Tanaka M."/>
            <person name="Tobe T."/>
            <person name="Iida T."/>
            <person name="Takami H."/>
            <person name="Honda T."/>
            <person name="Sasakawa C."/>
            <person name="Ogasawara N."/>
            <person name="Yasunaga T."/>
            <person name="Kuhara S."/>
            <person name="Shiba T."/>
            <person name="Hattori M."/>
            <person name="Shinagawa H."/>
        </authorList>
    </citation>
    <scope>NUCLEOTIDE SEQUENCE [LARGE SCALE GENOMIC DNA]</scope>
    <source>
        <strain>O157:H7 / Sakai / RIMD 0509952 / EHEC</strain>
    </source>
</reference>